<accession>A9N3Q5</accession>
<sequence length="387" mass="41132">MSVIKMTDLDLAGKRVFIRADLNVPVKEGKVTSDARIRASLPTIELALKQGAKVMVTSHLGRPTEGEYNEEFSLLPVVNYLKDKLSNPVRLVKDYLDGVDVAEGELVVLENVRFNKGEKKDDEALSKKYAALCDVFVMDAFGTAHRAQASTHGIGKFADVACAGPLLAAELDALGKALKEPARPMVAIVGGSKVSTKLTVLDSLSKIADQLIVGGGIANTFVAAQGHSVGKSLYEADLVDEAKRLLTTCDIPVPTDVRVATEFSETAPATLKSVNDVKEDEQILDIGDASAQQLAEILKNAKTILWNGPVGVFEFPNFRKGTEIVANAIADSEAFSIAGGGDTLAAIDLFGIADKISYISTGGGAFLEFVEGKVLPAVAMLEERAKK</sequence>
<reference key="1">
    <citation type="submission" date="2007-11" db="EMBL/GenBank/DDBJ databases">
        <authorList>
            <consortium name="The Salmonella enterica serovar Paratyphi B Genome Sequencing Project"/>
            <person name="McClelland M."/>
            <person name="Sanderson E.K."/>
            <person name="Porwollik S."/>
            <person name="Spieth J."/>
            <person name="Clifton W.S."/>
            <person name="Fulton R."/>
            <person name="Cordes M."/>
            <person name="Wollam A."/>
            <person name="Shah N."/>
            <person name="Pepin K."/>
            <person name="Bhonagiri V."/>
            <person name="Nash W."/>
            <person name="Johnson M."/>
            <person name="Thiruvilangam P."/>
            <person name="Wilson R."/>
        </authorList>
    </citation>
    <scope>NUCLEOTIDE SEQUENCE [LARGE SCALE GENOMIC DNA]</scope>
    <source>
        <strain>ATCC BAA-1250 / SPB7</strain>
    </source>
</reference>
<name>PGK_SALPB</name>
<feature type="chain" id="PRO_1000076604" description="Phosphoglycerate kinase">
    <location>
        <begin position="1"/>
        <end position="387"/>
    </location>
</feature>
<feature type="binding site" evidence="1">
    <location>
        <begin position="21"/>
        <end position="23"/>
    </location>
    <ligand>
        <name>substrate</name>
    </ligand>
</feature>
<feature type="binding site" evidence="1">
    <location>
        <position position="36"/>
    </location>
    <ligand>
        <name>substrate</name>
    </ligand>
</feature>
<feature type="binding site" evidence="1">
    <location>
        <begin position="59"/>
        <end position="62"/>
    </location>
    <ligand>
        <name>substrate</name>
    </ligand>
</feature>
<feature type="binding site" evidence="1">
    <location>
        <position position="113"/>
    </location>
    <ligand>
        <name>substrate</name>
    </ligand>
</feature>
<feature type="binding site" evidence="1">
    <location>
        <position position="146"/>
    </location>
    <ligand>
        <name>substrate</name>
    </ligand>
</feature>
<feature type="binding site" evidence="1">
    <location>
        <position position="197"/>
    </location>
    <ligand>
        <name>ATP</name>
        <dbReference type="ChEBI" id="CHEBI:30616"/>
    </ligand>
</feature>
<feature type="binding site" evidence="1">
    <location>
        <position position="314"/>
    </location>
    <ligand>
        <name>ATP</name>
        <dbReference type="ChEBI" id="CHEBI:30616"/>
    </ligand>
</feature>
<feature type="binding site" evidence="1">
    <location>
        <begin position="340"/>
        <end position="343"/>
    </location>
    <ligand>
        <name>ATP</name>
        <dbReference type="ChEBI" id="CHEBI:30616"/>
    </ligand>
</feature>
<comment type="catalytic activity">
    <reaction evidence="1">
        <text>(2R)-3-phosphoglycerate + ATP = (2R)-3-phospho-glyceroyl phosphate + ADP</text>
        <dbReference type="Rhea" id="RHEA:14801"/>
        <dbReference type="ChEBI" id="CHEBI:30616"/>
        <dbReference type="ChEBI" id="CHEBI:57604"/>
        <dbReference type="ChEBI" id="CHEBI:58272"/>
        <dbReference type="ChEBI" id="CHEBI:456216"/>
        <dbReference type="EC" id="2.7.2.3"/>
    </reaction>
</comment>
<comment type="pathway">
    <text evidence="1">Carbohydrate degradation; glycolysis; pyruvate from D-glyceraldehyde 3-phosphate: step 2/5.</text>
</comment>
<comment type="subunit">
    <text evidence="1">Monomer.</text>
</comment>
<comment type="subcellular location">
    <subcellularLocation>
        <location evidence="1">Cytoplasm</location>
    </subcellularLocation>
</comment>
<comment type="similarity">
    <text evidence="1">Belongs to the phosphoglycerate kinase family.</text>
</comment>
<evidence type="ECO:0000255" key="1">
    <source>
        <dbReference type="HAMAP-Rule" id="MF_00145"/>
    </source>
</evidence>
<dbReference type="EC" id="2.7.2.3" evidence="1"/>
<dbReference type="EMBL" id="CP000886">
    <property type="protein sequence ID" value="ABX69158.1"/>
    <property type="molecule type" value="Genomic_DNA"/>
</dbReference>
<dbReference type="RefSeq" id="WP_000111274.1">
    <property type="nucleotide sequence ID" value="NC_010102.1"/>
</dbReference>
<dbReference type="SMR" id="A9N3Q5"/>
<dbReference type="KEGG" id="spq:SPAB_03827"/>
<dbReference type="PATRIC" id="fig|1016998.12.peg.3606"/>
<dbReference type="HOGENOM" id="CLU_025427_0_2_6"/>
<dbReference type="BioCyc" id="SENT1016998:SPAB_RS15555-MONOMER"/>
<dbReference type="UniPathway" id="UPA00109">
    <property type="reaction ID" value="UER00185"/>
</dbReference>
<dbReference type="Proteomes" id="UP000008556">
    <property type="component" value="Chromosome"/>
</dbReference>
<dbReference type="GO" id="GO:0005829">
    <property type="term" value="C:cytosol"/>
    <property type="evidence" value="ECO:0007669"/>
    <property type="project" value="TreeGrafter"/>
</dbReference>
<dbReference type="GO" id="GO:0043531">
    <property type="term" value="F:ADP binding"/>
    <property type="evidence" value="ECO:0007669"/>
    <property type="project" value="TreeGrafter"/>
</dbReference>
<dbReference type="GO" id="GO:0005524">
    <property type="term" value="F:ATP binding"/>
    <property type="evidence" value="ECO:0007669"/>
    <property type="project" value="UniProtKB-KW"/>
</dbReference>
<dbReference type="GO" id="GO:0004618">
    <property type="term" value="F:phosphoglycerate kinase activity"/>
    <property type="evidence" value="ECO:0007669"/>
    <property type="project" value="UniProtKB-UniRule"/>
</dbReference>
<dbReference type="GO" id="GO:0006094">
    <property type="term" value="P:gluconeogenesis"/>
    <property type="evidence" value="ECO:0007669"/>
    <property type="project" value="TreeGrafter"/>
</dbReference>
<dbReference type="GO" id="GO:0006096">
    <property type="term" value="P:glycolytic process"/>
    <property type="evidence" value="ECO:0007669"/>
    <property type="project" value="UniProtKB-UniRule"/>
</dbReference>
<dbReference type="FunFam" id="3.40.50.1260:FF:000001">
    <property type="entry name" value="Phosphoglycerate kinase"/>
    <property type="match status" value="1"/>
</dbReference>
<dbReference type="FunFam" id="3.40.50.1260:FF:000002">
    <property type="entry name" value="Phosphoglycerate kinase"/>
    <property type="match status" value="1"/>
</dbReference>
<dbReference type="Gene3D" id="3.40.50.1260">
    <property type="entry name" value="Phosphoglycerate kinase, N-terminal domain"/>
    <property type="match status" value="2"/>
</dbReference>
<dbReference type="HAMAP" id="MF_00145">
    <property type="entry name" value="Phosphoglyc_kinase"/>
    <property type="match status" value="1"/>
</dbReference>
<dbReference type="InterPro" id="IPR001576">
    <property type="entry name" value="Phosphoglycerate_kinase"/>
</dbReference>
<dbReference type="InterPro" id="IPR015911">
    <property type="entry name" value="Phosphoglycerate_kinase_CS"/>
</dbReference>
<dbReference type="InterPro" id="IPR015824">
    <property type="entry name" value="Phosphoglycerate_kinase_N"/>
</dbReference>
<dbReference type="InterPro" id="IPR036043">
    <property type="entry name" value="Phosphoglycerate_kinase_sf"/>
</dbReference>
<dbReference type="PANTHER" id="PTHR11406">
    <property type="entry name" value="PHOSPHOGLYCERATE KINASE"/>
    <property type="match status" value="1"/>
</dbReference>
<dbReference type="PANTHER" id="PTHR11406:SF23">
    <property type="entry name" value="PHOSPHOGLYCERATE KINASE 1, CHLOROPLASTIC-RELATED"/>
    <property type="match status" value="1"/>
</dbReference>
<dbReference type="Pfam" id="PF00162">
    <property type="entry name" value="PGK"/>
    <property type="match status" value="1"/>
</dbReference>
<dbReference type="PIRSF" id="PIRSF000724">
    <property type="entry name" value="Pgk"/>
    <property type="match status" value="1"/>
</dbReference>
<dbReference type="PRINTS" id="PR00477">
    <property type="entry name" value="PHGLYCKINASE"/>
</dbReference>
<dbReference type="SUPFAM" id="SSF53748">
    <property type="entry name" value="Phosphoglycerate kinase"/>
    <property type="match status" value="1"/>
</dbReference>
<dbReference type="PROSITE" id="PS00111">
    <property type="entry name" value="PGLYCERATE_KINASE"/>
    <property type="match status" value="1"/>
</dbReference>
<keyword id="KW-0067">ATP-binding</keyword>
<keyword id="KW-0963">Cytoplasm</keyword>
<keyword id="KW-0324">Glycolysis</keyword>
<keyword id="KW-0418">Kinase</keyword>
<keyword id="KW-0547">Nucleotide-binding</keyword>
<keyword id="KW-0808">Transferase</keyword>
<proteinExistence type="inferred from homology"/>
<protein>
    <recommendedName>
        <fullName evidence="1">Phosphoglycerate kinase</fullName>
        <ecNumber evidence="1">2.7.2.3</ecNumber>
    </recommendedName>
</protein>
<gene>
    <name evidence="1" type="primary">pgk</name>
    <name type="ordered locus">SPAB_03827</name>
</gene>
<organism>
    <name type="scientific">Salmonella paratyphi B (strain ATCC BAA-1250 / SPB7)</name>
    <dbReference type="NCBI Taxonomy" id="1016998"/>
    <lineage>
        <taxon>Bacteria</taxon>
        <taxon>Pseudomonadati</taxon>
        <taxon>Pseudomonadota</taxon>
        <taxon>Gammaproteobacteria</taxon>
        <taxon>Enterobacterales</taxon>
        <taxon>Enterobacteriaceae</taxon>
        <taxon>Salmonella</taxon>
    </lineage>
</organism>